<reference key="1">
    <citation type="journal article" date="2008" name="BMC Genomics">
        <title>The genome sequence of the fish pathogen Aliivibrio salmonicida strain LFI1238 shows extensive evidence of gene decay.</title>
        <authorList>
            <person name="Hjerde E."/>
            <person name="Lorentzen M.S."/>
            <person name="Holden M.T."/>
            <person name="Seeger K."/>
            <person name="Paulsen S."/>
            <person name="Bason N."/>
            <person name="Churcher C."/>
            <person name="Harris D."/>
            <person name="Norbertczak H."/>
            <person name="Quail M.A."/>
            <person name="Sanders S."/>
            <person name="Thurston S."/>
            <person name="Parkhill J."/>
            <person name="Willassen N.P."/>
            <person name="Thomson N.R."/>
        </authorList>
    </citation>
    <scope>NUCLEOTIDE SEQUENCE [LARGE SCALE GENOMIC DNA]</scope>
    <source>
        <strain>LFI1238</strain>
    </source>
</reference>
<gene>
    <name evidence="1" type="primary">rnfH</name>
    <name type="ordered locus">VSAL_I2477</name>
</gene>
<sequence length="97" mass="11114">MIHVEVVYALPTEQVVFKLAVKADQTVQEIIEQSGVLERYPDIDLVVNKVGVFSRNVKLDATIRDKDRIEIYRPLLADPKEIRRKRAAQAKKEAAKK</sequence>
<comment type="similarity">
    <text evidence="1">Belongs to the UPF0125 (RnfH) family.</text>
</comment>
<organism>
    <name type="scientific">Aliivibrio salmonicida (strain LFI1238)</name>
    <name type="common">Vibrio salmonicida (strain LFI1238)</name>
    <dbReference type="NCBI Taxonomy" id="316275"/>
    <lineage>
        <taxon>Bacteria</taxon>
        <taxon>Pseudomonadati</taxon>
        <taxon>Pseudomonadota</taxon>
        <taxon>Gammaproteobacteria</taxon>
        <taxon>Vibrionales</taxon>
        <taxon>Vibrionaceae</taxon>
        <taxon>Aliivibrio</taxon>
    </lineage>
</organism>
<proteinExistence type="inferred from homology"/>
<evidence type="ECO:0000255" key="1">
    <source>
        <dbReference type="HAMAP-Rule" id="MF_00460"/>
    </source>
</evidence>
<accession>B6EKA7</accession>
<name>RNFH_ALISL</name>
<dbReference type="EMBL" id="FM178379">
    <property type="protein sequence ID" value="CAQ80161.1"/>
    <property type="molecule type" value="Genomic_DNA"/>
</dbReference>
<dbReference type="SMR" id="B6EKA7"/>
<dbReference type="KEGG" id="vsa:VSAL_I2477"/>
<dbReference type="eggNOG" id="COG2914">
    <property type="taxonomic scope" value="Bacteria"/>
</dbReference>
<dbReference type="HOGENOM" id="CLU_150721_1_0_6"/>
<dbReference type="Proteomes" id="UP000001730">
    <property type="component" value="Chromosome 1"/>
</dbReference>
<dbReference type="Gene3D" id="3.10.20.280">
    <property type="entry name" value="RnfH-like"/>
    <property type="match status" value="1"/>
</dbReference>
<dbReference type="HAMAP" id="MF_00460">
    <property type="entry name" value="UPF0125_RnfH"/>
    <property type="match status" value="1"/>
</dbReference>
<dbReference type="InterPro" id="IPR016155">
    <property type="entry name" value="Mopterin_synth/thiamin_S_b"/>
</dbReference>
<dbReference type="InterPro" id="IPR005346">
    <property type="entry name" value="RnfH"/>
</dbReference>
<dbReference type="InterPro" id="IPR037021">
    <property type="entry name" value="RnfH_sf"/>
</dbReference>
<dbReference type="NCBIfam" id="NF002490">
    <property type="entry name" value="PRK01777.1"/>
    <property type="match status" value="1"/>
</dbReference>
<dbReference type="PANTHER" id="PTHR37483">
    <property type="entry name" value="UPF0125 PROTEIN RATB"/>
    <property type="match status" value="1"/>
</dbReference>
<dbReference type="PANTHER" id="PTHR37483:SF1">
    <property type="entry name" value="UPF0125 PROTEIN RATB"/>
    <property type="match status" value="1"/>
</dbReference>
<dbReference type="Pfam" id="PF03658">
    <property type="entry name" value="Ub-RnfH"/>
    <property type="match status" value="1"/>
</dbReference>
<dbReference type="SUPFAM" id="SSF54285">
    <property type="entry name" value="MoaD/ThiS"/>
    <property type="match status" value="1"/>
</dbReference>
<feature type="chain" id="PRO_1000200166" description="Protein RnfH">
    <location>
        <begin position="1"/>
        <end position="97"/>
    </location>
</feature>
<protein>
    <recommendedName>
        <fullName evidence="1">Protein RnfH</fullName>
    </recommendedName>
</protein>